<dbReference type="EC" id="6.1.1.7" evidence="1"/>
<dbReference type="EMBL" id="CP000612">
    <property type="protein sequence ID" value="ABO49307.1"/>
    <property type="molecule type" value="Genomic_DNA"/>
</dbReference>
<dbReference type="SMR" id="A4J2K4"/>
<dbReference type="STRING" id="349161.Dred_0769"/>
<dbReference type="KEGG" id="drm:Dred_0769"/>
<dbReference type="eggNOG" id="COG0013">
    <property type="taxonomic scope" value="Bacteria"/>
</dbReference>
<dbReference type="HOGENOM" id="CLU_004485_1_1_9"/>
<dbReference type="Proteomes" id="UP000001556">
    <property type="component" value="Chromosome"/>
</dbReference>
<dbReference type="GO" id="GO:0005829">
    <property type="term" value="C:cytosol"/>
    <property type="evidence" value="ECO:0007669"/>
    <property type="project" value="TreeGrafter"/>
</dbReference>
<dbReference type="GO" id="GO:0004813">
    <property type="term" value="F:alanine-tRNA ligase activity"/>
    <property type="evidence" value="ECO:0007669"/>
    <property type="project" value="UniProtKB-UniRule"/>
</dbReference>
<dbReference type="GO" id="GO:0002161">
    <property type="term" value="F:aminoacyl-tRNA deacylase activity"/>
    <property type="evidence" value="ECO:0007669"/>
    <property type="project" value="TreeGrafter"/>
</dbReference>
<dbReference type="GO" id="GO:0005524">
    <property type="term" value="F:ATP binding"/>
    <property type="evidence" value="ECO:0007669"/>
    <property type="project" value="UniProtKB-UniRule"/>
</dbReference>
<dbReference type="GO" id="GO:0140096">
    <property type="term" value="F:catalytic activity, acting on a protein"/>
    <property type="evidence" value="ECO:0007669"/>
    <property type="project" value="UniProtKB-ARBA"/>
</dbReference>
<dbReference type="GO" id="GO:0016740">
    <property type="term" value="F:transferase activity"/>
    <property type="evidence" value="ECO:0007669"/>
    <property type="project" value="UniProtKB-ARBA"/>
</dbReference>
<dbReference type="GO" id="GO:0000049">
    <property type="term" value="F:tRNA binding"/>
    <property type="evidence" value="ECO:0007669"/>
    <property type="project" value="UniProtKB-KW"/>
</dbReference>
<dbReference type="GO" id="GO:0008270">
    <property type="term" value="F:zinc ion binding"/>
    <property type="evidence" value="ECO:0007669"/>
    <property type="project" value="UniProtKB-UniRule"/>
</dbReference>
<dbReference type="GO" id="GO:0006419">
    <property type="term" value="P:alanyl-tRNA aminoacylation"/>
    <property type="evidence" value="ECO:0007669"/>
    <property type="project" value="UniProtKB-UniRule"/>
</dbReference>
<dbReference type="CDD" id="cd00673">
    <property type="entry name" value="AlaRS_core"/>
    <property type="match status" value="1"/>
</dbReference>
<dbReference type="FunFam" id="3.10.310.40:FF:000001">
    <property type="entry name" value="Alanine--tRNA ligase"/>
    <property type="match status" value="1"/>
</dbReference>
<dbReference type="FunFam" id="3.30.54.20:FF:000001">
    <property type="entry name" value="Alanine--tRNA ligase"/>
    <property type="match status" value="1"/>
</dbReference>
<dbReference type="FunFam" id="3.30.930.10:FF:000004">
    <property type="entry name" value="Alanine--tRNA ligase"/>
    <property type="match status" value="1"/>
</dbReference>
<dbReference type="FunFam" id="3.30.980.10:FF:000004">
    <property type="entry name" value="Alanine--tRNA ligase, cytoplasmic"/>
    <property type="match status" value="1"/>
</dbReference>
<dbReference type="Gene3D" id="2.40.30.130">
    <property type="match status" value="1"/>
</dbReference>
<dbReference type="Gene3D" id="3.10.310.40">
    <property type="match status" value="1"/>
</dbReference>
<dbReference type="Gene3D" id="3.30.54.20">
    <property type="match status" value="1"/>
</dbReference>
<dbReference type="Gene3D" id="6.10.250.550">
    <property type="match status" value="1"/>
</dbReference>
<dbReference type="Gene3D" id="3.30.930.10">
    <property type="entry name" value="Bira Bifunctional Protein, Domain 2"/>
    <property type="match status" value="1"/>
</dbReference>
<dbReference type="Gene3D" id="3.30.980.10">
    <property type="entry name" value="Threonyl-trna Synthetase, Chain A, domain 2"/>
    <property type="match status" value="1"/>
</dbReference>
<dbReference type="HAMAP" id="MF_00036_B">
    <property type="entry name" value="Ala_tRNA_synth_B"/>
    <property type="match status" value="1"/>
</dbReference>
<dbReference type="InterPro" id="IPR045864">
    <property type="entry name" value="aa-tRNA-synth_II/BPL/LPL"/>
</dbReference>
<dbReference type="InterPro" id="IPR002318">
    <property type="entry name" value="Ala-tRNA-lgiase_IIc"/>
</dbReference>
<dbReference type="InterPro" id="IPR018162">
    <property type="entry name" value="Ala-tRNA-ligase_IIc_anticod-bd"/>
</dbReference>
<dbReference type="InterPro" id="IPR018165">
    <property type="entry name" value="Ala-tRNA-synth_IIc_core"/>
</dbReference>
<dbReference type="InterPro" id="IPR018164">
    <property type="entry name" value="Ala-tRNA-synth_IIc_N"/>
</dbReference>
<dbReference type="InterPro" id="IPR050058">
    <property type="entry name" value="Ala-tRNA_ligase"/>
</dbReference>
<dbReference type="InterPro" id="IPR023033">
    <property type="entry name" value="Ala_tRNA_ligase_euk/bac"/>
</dbReference>
<dbReference type="InterPro" id="IPR003156">
    <property type="entry name" value="DHHA1_dom"/>
</dbReference>
<dbReference type="InterPro" id="IPR018163">
    <property type="entry name" value="Thr/Ala-tRNA-synth_IIc_edit"/>
</dbReference>
<dbReference type="InterPro" id="IPR009000">
    <property type="entry name" value="Transl_B-barrel_sf"/>
</dbReference>
<dbReference type="InterPro" id="IPR012947">
    <property type="entry name" value="tRNA_SAD"/>
</dbReference>
<dbReference type="NCBIfam" id="TIGR00344">
    <property type="entry name" value="alaS"/>
    <property type="match status" value="1"/>
</dbReference>
<dbReference type="PANTHER" id="PTHR11777:SF9">
    <property type="entry name" value="ALANINE--TRNA LIGASE, CYTOPLASMIC"/>
    <property type="match status" value="1"/>
</dbReference>
<dbReference type="PANTHER" id="PTHR11777">
    <property type="entry name" value="ALANYL-TRNA SYNTHETASE"/>
    <property type="match status" value="1"/>
</dbReference>
<dbReference type="Pfam" id="PF02272">
    <property type="entry name" value="DHHA1"/>
    <property type="match status" value="1"/>
</dbReference>
<dbReference type="Pfam" id="PF01411">
    <property type="entry name" value="tRNA-synt_2c"/>
    <property type="match status" value="1"/>
</dbReference>
<dbReference type="Pfam" id="PF07973">
    <property type="entry name" value="tRNA_SAD"/>
    <property type="match status" value="1"/>
</dbReference>
<dbReference type="PRINTS" id="PR00980">
    <property type="entry name" value="TRNASYNTHALA"/>
</dbReference>
<dbReference type="SMART" id="SM00863">
    <property type="entry name" value="tRNA_SAD"/>
    <property type="match status" value="1"/>
</dbReference>
<dbReference type="SUPFAM" id="SSF55681">
    <property type="entry name" value="Class II aaRS and biotin synthetases"/>
    <property type="match status" value="1"/>
</dbReference>
<dbReference type="SUPFAM" id="SSF101353">
    <property type="entry name" value="Putative anticodon-binding domain of alanyl-tRNA synthetase (AlaRS)"/>
    <property type="match status" value="1"/>
</dbReference>
<dbReference type="SUPFAM" id="SSF55186">
    <property type="entry name" value="ThrRS/AlaRS common domain"/>
    <property type="match status" value="1"/>
</dbReference>
<dbReference type="SUPFAM" id="SSF50447">
    <property type="entry name" value="Translation proteins"/>
    <property type="match status" value="1"/>
</dbReference>
<dbReference type="PROSITE" id="PS50860">
    <property type="entry name" value="AA_TRNA_LIGASE_II_ALA"/>
    <property type="match status" value="1"/>
</dbReference>
<accession>A4J2K4</accession>
<feature type="chain" id="PRO_0000347586" description="Alanine--tRNA ligase">
    <location>
        <begin position="1"/>
        <end position="878"/>
    </location>
</feature>
<feature type="binding site" evidence="1">
    <location>
        <position position="565"/>
    </location>
    <ligand>
        <name>Zn(2+)</name>
        <dbReference type="ChEBI" id="CHEBI:29105"/>
    </ligand>
</feature>
<feature type="binding site" evidence="1">
    <location>
        <position position="569"/>
    </location>
    <ligand>
        <name>Zn(2+)</name>
        <dbReference type="ChEBI" id="CHEBI:29105"/>
    </ligand>
</feature>
<feature type="binding site" evidence="1">
    <location>
        <position position="667"/>
    </location>
    <ligand>
        <name>Zn(2+)</name>
        <dbReference type="ChEBI" id="CHEBI:29105"/>
    </ligand>
</feature>
<feature type="binding site" evidence="1">
    <location>
        <position position="671"/>
    </location>
    <ligand>
        <name>Zn(2+)</name>
        <dbReference type="ChEBI" id="CHEBI:29105"/>
    </ligand>
</feature>
<comment type="function">
    <text evidence="1">Catalyzes the attachment of alanine to tRNA(Ala) in a two-step reaction: alanine is first activated by ATP to form Ala-AMP and then transferred to the acceptor end of tRNA(Ala). Also edits incorrectly charged Ser-tRNA(Ala) and Gly-tRNA(Ala) via its editing domain.</text>
</comment>
<comment type="catalytic activity">
    <reaction evidence="1">
        <text>tRNA(Ala) + L-alanine + ATP = L-alanyl-tRNA(Ala) + AMP + diphosphate</text>
        <dbReference type="Rhea" id="RHEA:12540"/>
        <dbReference type="Rhea" id="RHEA-COMP:9657"/>
        <dbReference type="Rhea" id="RHEA-COMP:9923"/>
        <dbReference type="ChEBI" id="CHEBI:30616"/>
        <dbReference type="ChEBI" id="CHEBI:33019"/>
        <dbReference type="ChEBI" id="CHEBI:57972"/>
        <dbReference type="ChEBI" id="CHEBI:78442"/>
        <dbReference type="ChEBI" id="CHEBI:78497"/>
        <dbReference type="ChEBI" id="CHEBI:456215"/>
        <dbReference type="EC" id="6.1.1.7"/>
    </reaction>
</comment>
<comment type="cofactor">
    <cofactor evidence="1">
        <name>Zn(2+)</name>
        <dbReference type="ChEBI" id="CHEBI:29105"/>
    </cofactor>
    <text evidence="1">Binds 1 zinc ion per subunit.</text>
</comment>
<comment type="subcellular location">
    <subcellularLocation>
        <location evidence="1">Cytoplasm</location>
    </subcellularLocation>
</comment>
<comment type="domain">
    <text evidence="1">Consists of three domains; the N-terminal catalytic domain, the editing domain and the C-terminal C-Ala domain. The editing domain removes incorrectly charged amino acids, while the C-Ala domain, along with tRNA(Ala), serves as a bridge to cooperatively bring together the editing and aminoacylation centers thus stimulating deacylation of misacylated tRNAs.</text>
</comment>
<comment type="similarity">
    <text evidence="1">Belongs to the class-II aminoacyl-tRNA synthetase family.</text>
</comment>
<name>SYA_DESRM</name>
<keyword id="KW-0030">Aminoacyl-tRNA synthetase</keyword>
<keyword id="KW-0067">ATP-binding</keyword>
<keyword id="KW-0963">Cytoplasm</keyword>
<keyword id="KW-0436">Ligase</keyword>
<keyword id="KW-0479">Metal-binding</keyword>
<keyword id="KW-0547">Nucleotide-binding</keyword>
<keyword id="KW-0648">Protein biosynthesis</keyword>
<keyword id="KW-1185">Reference proteome</keyword>
<keyword id="KW-0694">RNA-binding</keyword>
<keyword id="KW-0820">tRNA-binding</keyword>
<keyword id="KW-0862">Zinc</keyword>
<protein>
    <recommendedName>
        <fullName evidence="1">Alanine--tRNA ligase</fullName>
        <ecNumber evidence="1">6.1.1.7</ecNumber>
    </recommendedName>
    <alternativeName>
        <fullName evidence="1">Alanyl-tRNA synthetase</fullName>
        <shortName evidence="1">AlaRS</shortName>
    </alternativeName>
</protein>
<reference key="1">
    <citation type="submission" date="2007-03" db="EMBL/GenBank/DDBJ databases">
        <title>Complete sequence of Desulfotomaculum reducens MI-1.</title>
        <authorList>
            <consortium name="US DOE Joint Genome Institute"/>
            <person name="Copeland A."/>
            <person name="Lucas S."/>
            <person name="Lapidus A."/>
            <person name="Barry K."/>
            <person name="Detter J.C."/>
            <person name="Glavina del Rio T."/>
            <person name="Hammon N."/>
            <person name="Israni S."/>
            <person name="Dalin E."/>
            <person name="Tice H."/>
            <person name="Pitluck S."/>
            <person name="Sims D."/>
            <person name="Brettin T."/>
            <person name="Bruce D."/>
            <person name="Han C."/>
            <person name="Tapia R."/>
            <person name="Schmutz J."/>
            <person name="Larimer F."/>
            <person name="Land M."/>
            <person name="Hauser L."/>
            <person name="Kyrpides N."/>
            <person name="Kim E."/>
            <person name="Tebo B.M."/>
            <person name="Richardson P."/>
        </authorList>
    </citation>
    <scope>NUCLEOTIDE SEQUENCE [LARGE SCALE GENOMIC DNA]</scope>
    <source>
        <strain>ATCC BAA-1160 / DSM 100696 / MI-1</strain>
    </source>
</reference>
<sequence>MLTGKEIREKYLRFFEQRGHQILPSASLIPHNDPSILWTAAGMVPFKPFFTGQAVPEYQRVTTCQKCIRTPDIESVGRTARHHTFFEMLGNFSFGDYFKESIIPWAWEFITKELNLPKEKLWITIYQDDDEAFEIWNKVVGIPSERIVRLGKDTNFWEIGVGPCGPCSEIYVDLGEARGCGSPECQVGCDCDRFLEIWNLVFIQFFRDEEGNYSPLENKGIDTGMGLERVASVLQGVASNFDTDIFREIMDFTANLAGQEYGQKADIDLALKVIADHCRAVTFAVSDGALPGNEGRGYVIRRLLRRAVRFGRVLGVREPFLYKVAQAVIKQMQDAYPELKQKAEHVLRVIRTEEERFLETLAAGSDILSALINEAKASGASEITGDDAFKLYDTFGFPLELTQEIAEEQGLAVDVEVFNAAMEEQRKRARSARQETEYLSERGVLYKALREELGETRFIGYSALEADSNIMALLKDGMQEISAVAGEEVEIVLDVTPCYAESGGQVADHAILRGPDLEVEITSVNKPVEGLVIHRGKVLSGIIKRHDSVKAIVDQPRRQDTARNHSATHLLHKALKEVLGDHVNQAGSLVEPDRLRFDFTHYAAVTSEELRRIEEIVNEAVLSNLSIEVFETSLSKAKEMGAAALFGEKYGKQVRVVKMGDFSMELCGGTHLTSTAEVGLFKIFNETSVGAGLRRIEAVTGTGVLKYLKAKEEQLEEIASVIKSPMHELVRRSEALVQQNKSLEQEIEALRNKLAKSEVQDILGNIKRAKEVPVLASVVAAPDMDNLRGMVDMLRDKMGSGVILLGSTAGEKVNLVAAVTKDLHGQGLHAGNLVKEIAKMVGGGGGGRPDMAQAGGKNPEKLQEAIDQVCRVVEGQIK</sequence>
<evidence type="ECO:0000255" key="1">
    <source>
        <dbReference type="HAMAP-Rule" id="MF_00036"/>
    </source>
</evidence>
<proteinExistence type="inferred from homology"/>
<organism>
    <name type="scientific">Desulforamulus reducens (strain ATCC BAA-1160 / DSM 100696 / MI-1)</name>
    <name type="common">Desulfotomaculum reducens</name>
    <dbReference type="NCBI Taxonomy" id="349161"/>
    <lineage>
        <taxon>Bacteria</taxon>
        <taxon>Bacillati</taxon>
        <taxon>Bacillota</taxon>
        <taxon>Clostridia</taxon>
        <taxon>Eubacteriales</taxon>
        <taxon>Peptococcaceae</taxon>
        <taxon>Desulforamulus</taxon>
    </lineage>
</organism>
<gene>
    <name evidence="1" type="primary">alaS</name>
    <name type="ordered locus">Dred_0769</name>
</gene>